<accession>P18896</accession>
<protein>
    <recommendedName>
        <fullName>Increased glyphosate resistance protein</fullName>
    </recommendedName>
</protein>
<organism>
    <name type="scientific">Pseudomonas sp. (strain PG2982)</name>
    <dbReference type="NCBI Taxonomy" id="308"/>
    <lineage>
        <taxon>Bacteria</taxon>
        <taxon>Pseudomonadati</taxon>
        <taxon>Pseudomonadota</taxon>
    </lineage>
</organism>
<name>IGRA_PSES2</name>
<proteinExistence type="predicted"/>
<feature type="chain" id="PRO_0000084176" description="Increased glyphosate resistance protein">
    <location>
        <begin position="1"/>
        <end position="351"/>
    </location>
</feature>
<feature type="region of interest" description="Disordered" evidence="1">
    <location>
        <begin position="1"/>
        <end position="29"/>
    </location>
</feature>
<feature type="compositionally biased region" description="Basic and acidic residues" evidence="1">
    <location>
        <begin position="1"/>
        <end position="18"/>
    </location>
</feature>
<evidence type="ECO:0000256" key="1">
    <source>
        <dbReference type="SAM" id="MobiDB-lite"/>
    </source>
</evidence>
<evidence type="ECO:0000269" key="2">
    <source>
    </source>
</evidence>
<evidence type="ECO:0000303" key="3">
    <source>
    </source>
</evidence>
<reference key="1">
    <citation type="journal article" date="1990" name="Appl. Environ. Microbiol.">
        <title>Cloning of a gene from Pseudomonas sp. strain PG2982 conferring increased glyphosate resistance.</title>
        <authorList>
            <person name="Fitzgibbon J.E."/>
            <person name="Braymer H.D."/>
        </authorList>
    </citation>
    <scope>NUCLEOTIDE SEQUENCE [GENOMIC DNA]</scope>
    <scope>FUNCTION</scope>
    <scope>HERBICIDE RESISTANCE</scope>
</reference>
<sequence length="351" mass="39459">MHREDDSTSTGRREERLSTGKGDSLQPGPDQRIFQTALYRPQRHGLILFPQRLYGNCLAPLAYSNYVAPRELHSSIHAEGRTLSVRLIMLFVNTSKRSRTLPPVGSTVMRILVNLCQLLSAEFQLLQGSQRLIFKLCYRTCPDQRRGDTRVAQCPGDSHLSQCLTATFRNGVQRPDAPQQLFVLCTGLQGAALIRPRPFGDSVQIAGGQQSLSQRRKDNAAGSDLAKGIEQAIFDPAIEHVVIGLMNEKRNPLFLQDRGSLLRQFRRIAGNPHIKRLALTVQMRERSHRLFQRRGGVHTVRIEDVDIVEPHPLQRPGRGWRSGICDLPPMPPYGPGHMSQPAFEEMIISSR</sequence>
<keyword id="KW-0359">Herbicide resistance</keyword>
<dbReference type="EMBL" id="M37389">
    <property type="protein sequence ID" value="AAA25856.1"/>
    <property type="molecule type" value="Genomic_DNA"/>
</dbReference>
<dbReference type="PIR" id="A43793">
    <property type="entry name" value="A43793"/>
</dbReference>
<dbReference type="GO" id="GO:0009635">
    <property type="term" value="P:response to herbicide"/>
    <property type="evidence" value="ECO:0007669"/>
    <property type="project" value="UniProtKB-KW"/>
</dbReference>
<gene>
    <name evidence="3" type="primary">igrA</name>
</gene>
<comment type="function">
    <text evidence="2">Confers an increase in glyphosate resistance when expressed in E.coli.</text>
</comment>
<comment type="miscellaneous">
    <text evidence="2">PG2982 is able to utilize glyphosate and other phosphonate compounds as a sole phosphorus source; it can grow in over 100 mM glyphosate.</text>
</comment>